<gene>
    <name evidence="1" type="primary">fliW</name>
    <name type="ordered locus">Gura_4096</name>
</gene>
<dbReference type="EMBL" id="CP000698">
    <property type="protein sequence ID" value="ABQ28239.1"/>
    <property type="molecule type" value="Genomic_DNA"/>
</dbReference>
<dbReference type="RefSeq" id="WP_011940875.1">
    <property type="nucleotide sequence ID" value="NC_009483.1"/>
</dbReference>
<dbReference type="SMR" id="A5G8X1"/>
<dbReference type="STRING" id="351605.Gura_4096"/>
<dbReference type="KEGG" id="gur:Gura_4096"/>
<dbReference type="HOGENOM" id="CLU_112356_0_2_7"/>
<dbReference type="OrthoDB" id="9801235at2"/>
<dbReference type="Proteomes" id="UP000006695">
    <property type="component" value="Chromosome"/>
</dbReference>
<dbReference type="GO" id="GO:0005737">
    <property type="term" value="C:cytoplasm"/>
    <property type="evidence" value="ECO:0007669"/>
    <property type="project" value="UniProtKB-SubCell"/>
</dbReference>
<dbReference type="GO" id="GO:0044780">
    <property type="term" value="P:bacterial-type flagellum assembly"/>
    <property type="evidence" value="ECO:0007669"/>
    <property type="project" value="UniProtKB-UniRule"/>
</dbReference>
<dbReference type="GO" id="GO:0006417">
    <property type="term" value="P:regulation of translation"/>
    <property type="evidence" value="ECO:0007669"/>
    <property type="project" value="UniProtKB-KW"/>
</dbReference>
<dbReference type="Gene3D" id="2.30.290.10">
    <property type="entry name" value="BH3618-like"/>
    <property type="match status" value="1"/>
</dbReference>
<dbReference type="HAMAP" id="MF_01185">
    <property type="entry name" value="FliW"/>
    <property type="match status" value="1"/>
</dbReference>
<dbReference type="InterPro" id="IPR003775">
    <property type="entry name" value="Flagellar_assembly_factor_FliW"/>
</dbReference>
<dbReference type="InterPro" id="IPR024046">
    <property type="entry name" value="Flagellar_assmbl_FliW_dom_sf"/>
</dbReference>
<dbReference type="NCBIfam" id="NF009801">
    <property type="entry name" value="PRK13285.2-4"/>
    <property type="match status" value="1"/>
</dbReference>
<dbReference type="PANTHER" id="PTHR39190">
    <property type="entry name" value="FLAGELLAR ASSEMBLY FACTOR FLIW"/>
    <property type="match status" value="1"/>
</dbReference>
<dbReference type="PANTHER" id="PTHR39190:SF1">
    <property type="entry name" value="FLAGELLAR ASSEMBLY FACTOR FLIW"/>
    <property type="match status" value="1"/>
</dbReference>
<dbReference type="Pfam" id="PF02623">
    <property type="entry name" value="FliW"/>
    <property type="match status" value="1"/>
</dbReference>
<dbReference type="SUPFAM" id="SSF141457">
    <property type="entry name" value="BH3618-like"/>
    <property type="match status" value="1"/>
</dbReference>
<sequence>MKVTTTRFGELDIEEGKVIHMPEGMLGFVEKRFILLTPENLGPFCWLQAVDNPDLAFVVADAKNCAPGYTFALTAEECRALELSERSEAIFLLVVTMAPEPGDITVNLRGPIVLNPERLIARQIVIEGEKYTTRHPFFETSEKKQSGLQRLERQPEKSVPPAG</sequence>
<protein>
    <recommendedName>
        <fullName evidence="1">Flagellar assembly factor FliW</fullName>
    </recommendedName>
</protein>
<proteinExistence type="inferred from homology"/>
<feature type="chain" id="PRO_1000085452" description="Flagellar assembly factor FliW">
    <location>
        <begin position="1"/>
        <end position="163"/>
    </location>
</feature>
<feature type="region of interest" description="Disordered" evidence="2">
    <location>
        <begin position="136"/>
        <end position="163"/>
    </location>
</feature>
<feature type="compositionally biased region" description="Basic and acidic residues" evidence="2">
    <location>
        <begin position="136"/>
        <end position="156"/>
    </location>
</feature>
<reference key="1">
    <citation type="submission" date="2007-05" db="EMBL/GenBank/DDBJ databases">
        <title>Complete sequence of Geobacter uraniireducens Rf4.</title>
        <authorList>
            <consortium name="US DOE Joint Genome Institute"/>
            <person name="Copeland A."/>
            <person name="Lucas S."/>
            <person name="Lapidus A."/>
            <person name="Barry K."/>
            <person name="Detter J.C."/>
            <person name="Glavina del Rio T."/>
            <person name="Hammon N."/>
            <person name="Israni S."/>
            <person name="Dalin E."/>
            <person name="Tice H."/>
            <person name="Pitluck S."/>
            <person name="Chertkov O."/>
            <person name="Brettin T."/>
            <person name="Bruce D."/>
            <person name="Han C."/>
            <person name="Schmutz J."/>
            <person name="Larimer F."/>
            <person name="Land M."/>
            <person name="Hauser L."/>
            <person name="Kyrpides N."/>
            <person name="Mikhailova N."/>
            <person name="Shelobolina E."/>
            <person name="Aklujkar M."/>
            <person name="Lovley D."/>
            <person name="Richardson P."/>
        </authorList>
    </citation>
    <scope>NUCLEOTIDE SEQUENCE [LARGE SCALE GENOMIC DNA]</scope>
    <source>
        <strain>ATCC BAA-1134 / JCM 13001 / Rf4</strain>
    </source>
</reference>
<keyword id="KW-1005">Bacterial flagellum biogenesis</keyword>
<keyword id="KW-0143">Chaperone</keyword>
<keyword id="KW-0963">Cytoplasm</keyword>
<keyword id="KW-1185">Reference proteome</keyword>
<keyword id="KW-0810">Translation regulation</keyword>
<comment type="function">
    <text evidence="1">Acts as an anti-CsrA protein, binds CsrA and prevents it from repressing translation of its target genes, one of which is flagellin. Binds to flagellin and participates in the assembly of the flagellum.</text>
</comment>
<comment type="subunit">
    <text evidence="1">Interacts with translational regulator CsrA and flagellin(s).</text>
</comment>
<comment type="subcellular location">
    <subcellularLocation>
        <location evidence="1">Cytoplasm</location>
    </subcellularLocation>
</comment>
<comment type="similarity">
    <text evidence="1">Belongs to the FliW family.</text>
</comment>
<evidence type="ECO:0000255" key="1">
    <source>
        <dbReference type="HAMAP-Rule" id="MF_01185"/>
    </source>
</evidence>
<evidence type="ECO:0000256" key="2">
    <source>
        <dbReference type="SAM" id="MobiDB-lite"/>
    </source>
</evidence>
<name>FLIW_GEOUR</name>
<organism>
    <name type="scientific">Geotalea uraniireducens (strain Rf4)</name>
    <name type="common">Geobacter uraniireducens</name>
    <dbReference type="NCBI Taxonomy" id="351605"/>
    <lineage>
        <taxon>Bacteria</taxon>
        <taxon>Pseudomonadati</taxon>
        <taxon>Thermodesulfobacteriota</taxon>
        <taxon>Desulfuromonadia</taxon>
        <taxon>Geobacterales</taxon>
        <taxon>Geobacteraceae</taxon>
        <taxon>Geotalea</taxon>
    </lineage>
</organism>
<accession>A5G8X1</accession>